<sequence>MDHLPIFCQLRDRDCLIVGGGDVAERKARLLLEAGARLTVNALTFIPQFTVWANEGMLTLVEGPFDETLLDSCWLAIAATDDDTVNQRVSDAAESRRIFCNVVDAPKAASFIMPSIIDRSPLMVAVSSGGTSPVLARLLREKLESLLPQHLGQVARYAGQLRARVKKQFATMGERRRFWEKFFVNDRLAQSLANADEKAVNATTERLFSEPLDHRGEVVLVGAGPGDAGLLTLKGLQQIQQADIVVYDRLVSDDIMNLVRRDADRVFVGKRAGYHCVPQEEINQILLREAQKGKRVVRLKGGDPFIFGRGGEELETLCHAGIPFSVVPGITAASGCSAYSGIPLTHRDYAQSVRLVTGHLKTGGELDWENLAAEKQTLVFYMGLNQAATIQEKLIAFGMQADMPVALVENGTSVKQRVVHGVLTQLGELAQQVESPALIIVGRVVGLRDKLNWFSNY</sequence>
<comment type="function">
    <text evidence="1">Multifunctional enzyme that catalyzes the SAM-dependent methylations of uroporphyrinogen III at position C-2 and C-7 to form precorrin-2 via precorrin-1. Then it catalyzes the NAD-dependent ring dehydrogenation of precorrin-2 to yield sirohydrochlorin. Finally, it catalyzes the ferrochelation of sirohydrochlorin to yield siroheme.</text>
</comment>
<comment type="catalytic activity">
    <reaction evidence="1">
        <text>uroporphyrinogen III + 2 S-adenosyl-L-methionine = precorrin-2 + 2 S-adenosyl-L-homocysteine + H(+)</text>
        <dbReference type="Rhea" id="RHEA:32459"/>
        <dbReference type="ChEBI" id="CHEBI:15378"/>
        <dbReference type="ChEBI" id="CHEBI:57308"/>
        <dbReference type="ChEBI" id="CHEBI:57856"/>
        <dbReference type="ChEBI" id="CHEBI:58827"/>
        <dbReference type="ChEBI" id="CHEBI:59789"/>
        <dbReference type="EC" id="2.1.1.107"/>
    </reaction>
</comment>
<comment type="catalytic activity">
    <reaction evidence="1">
        <text>precorrin-2 + NAD(+) = sirohydrochlorin + NADH + 2 H(+)</text>
        <dbReference type="Rhea" id="RHEA:15613"/>
        <dbReference type="ChEBI" id="CHEBI:15378"/>
        <dbReference type="ChEBI" id="CHEBI:57540"/>
        <dbReference type="ChEBI" id="CHEBI:57945"/>
        <dbReference type="ChEBI" id="CHEBI:58351"/>
        <dbReference type="ChEBI" id="CHEBI:58827"/>
        <dbReference type="EC" id="1.3.1.76"/>
    </reaction>
</comment>
<comment type="catalytic activity">
    <reaction evidence="1">
        <text>siroheme + 2 H(+) = sirohydrochlorin + Fe(2+)</text>
        <dbReference type="Rhea" id="RHEA:24360"/>
        <dbReference type="ChEBI" id="CHEBI:15378"/>
        <dbReference type="ChEBI" id="CHEBI:29033"/>
        <dbReference type="ChEBI" id="CHEBI:58351"/>
        <dbReference type="ChEBI" id="CHEBI:60052"/>
        <dbReference type="EC" id="4.99.1.4"/>
    </reaction>
</comment>
<comment type="pathway">
    <text evidence="1">Cofactor biosynthesis; adenosylcobalamin biosynthesis; precorrin-2 from uroporphyrinogen III: step 1/1.</text>
</comment>
<comment type="pathway">
    <text evidence="1">Cofactor biosynthesis; adenosylcobalamin biosynthesis; sirohydrochlorin from precorrin-2: step 1/1.</text>
</comment>
<comment type="pathway">
    <text evidence="1">Porphyrin-containing compound metabolism; siroheme biosynthesis; precorrin-2 from uroporphyrinogen III: step 1/1.</text>
</comment>
<comment type="pathway">
    <text evidence="1">Porphyrin-containing compound metabolism; siroheme biosynthesis; siroheme from sirohydrochlorin: step 1/1.</text>
</comment>
<comment type="pathway">
    <text evidence="1">Porphyrin-containing compound metabolism; siroheme biosynthesis; sirohydrochlorin from precorrin-2: step 1/1.</text>
</comment>
<comment type="similarity">
    <text evidence="1">In the N-terminal section; belongs to the precorrin-2 dehydrogenase / sirohydrochlorin ferrochelatase family.</text>
</comment>
<comment type="similarity">
    <text evidence="1">In the C-terminal section; belongs to the precorrin methyltransferase family.</text>
</comment>
<organism>
    <name type="scientific">Salmonella enteritidis PT4 (strain P125109)</name>
    <dbReference type="NCBI Taxonomy" id="550537"/>
    <lineage>
        <taxon>Bacteria</taxon>
        <taxon>Pseudomonadati</taxon>
        <taxon>Pseudomonadota</taxon>
        <taxon>Gammaproteobacteria</taxon>
        <taxon>Enterobacterales</taxon>
        <taxon>Enterobacteriaceae</taxon>
        <taxon>Salmonella</taxon>
    </lineage>
</organism>
<reference key="1">
    <citation type="journal article" date="2008" name="Genome Res.">
        <title>Comparative genome analysis of Salmonella enteritidis PT4 and Salmonella gallinarum 287/91 provides insights into evolutionary and host adaptation pathways.</title>
        <authorList>
            <person name="Thomson N.R."/>
            <person name="Clayton D.J."/>
            <person name="Windhorst D."/>
            <person name="Vernikos G."/>
            <person name="Davidson S."/>
            <person name="Churcher C."/>
            <person name="Quail M.A."/>
            <person name="Stevens M."/>
            <person name="Jones M.A."/>
            <person name="Watson M."/>
            <person name="Barron A."/>
            <person name="Layton A."/>
            <person name="Pickard D."/>
            <person name="Kingsley R.A."/>
            <person name="Bignell A."/>
            <person name="Clark L."/>
            <person name="Harris B."/>
            <person name="Ormond D."/>
            <person name="Abdellah Z."/>
            <person name="Brooks K."/>
            <person name="Cherevach I."/>
            <person name="Chillingworth T."/>
            <person name="Woodward J."/>
            <person name="Norberczak H."/>
            <person name="Lord A."/>
            <person name="Arrowsmith C."/>
            <person name="Jagels K."/>
            <person name="Moule S."/>
            <person name="Mungall K."/>
            <person name="Saunders M."/>
            <person name="Whitehead S."/>
            <person name="Chabalgoity J.A."/>
            <person name="Maskell D."/>
            <person name="Humphreys T."/>
            <person name="Roberts M."/>
            <person name="Barrow P.A."/>
            <person name="Dougan G."/>
            <person name="Parkhill J."/>
        </authorList>
    </citation>
    <scope>NUCLEOTIDE SEQUENCE [LARGE SCALE GENOMIC DNA]</scope>
    <source>
        <strain>P125109</strain>
    </source>
</reference>
<feature type="chain" id="PRO_1000186952" description="Siroheme synthase">
    <location>
        <begin position="1"/>
        <end position="457"/>
    </location>
</feature>
<feature type="region of interest" description="Precorrin-2 dehydrogenase /sirohydrochlorin ferrochelatase" evidence="1">
    <location>
        <begin position="1"/>
        <end position="204"/>
    </location>
</feature>
<feature type="region of interest" description="Uroporphyrinogen-III C-methyltransferase" evidence="1">
    <location>
        <begin position="216"/>
        <end position="457"/>
    </location>
</feature>
<feature type="active site" description="Proton acceptor" evidence="1">
    <location>
        <position position="248"/>
    </location>
</feature>
<feature type="active site" description="Proton donor" evidence="1">
    <location>
        <position position="270"/>
    </location>
</feature>
<feature type="binding site" evidence="1">
    <location>
        <begin position="22"/>
        <end position="23"/>
    </location>
    <ligand>
        <name>NAD(+)</name>
        <dbReference type="ChEBI" id="CHEBI:57540"/>
    </ligand>
</feature>
<feature type="binding site" evidence="1">
    <location>
        <begin position="43"/>
        <end position="44"/>
    </location>
    <ligand>
        <name>NAD(+)</name>
        <dbReference type="ChEBI" id="CHEBI:57540"/>
    </ligand>
</feature>
<feature type="binding site" evidence="1">
    <location>
        <position position="225"/>
    </location>
    <ligand>
        <name>S-adenosyl-L-methionine</name>
        <dbReference type="ChEBI" id="CHEBI:59789"/>
    </ligand>
</feature>
<feature type="binding site" evidence="1">
    <location>
        <begin position="301"/>
        <end position="303"/>
    </location>
    <ligand>
        <name>S-adenosyl-L-methionine</name>
        <dbReference type="ChEBI" id="CHEBI:59789"/>
    </ligand>
</feature>
<feature type="binding site" evidence="1">
    <location>
        <position position="306"/>
    </location>
    <ligand>
        <name>S-adenosyl-L-methionine</name>
        <dbReference type="ChEBI" id="CHEBI:59789"/>
    </ligand>
</feature>
<feature type="binding site" evidence="1">
    <location>
        <begin position="331"/>
        <end position="332"/>
    </location>
    <ligand>
        <name>S-adenosyl-L-methionine</name>
        <dbReference type="ChEBI" id="CHEBI:59789"/>
    </ligand>
</feature>
<feature type="binding site" evidence="1">
    <location>
        <position position="382"/>
    </location>
    <ligand>
        <name>S-adenosyl-L-methionine</name>
        <dbReference type="ChEBI" id="CHEBI:59789"/>
    </ligand>
</feature>
<feature type="binding site" evidence="1">
    <location>
        <position position="411"/>
    </location>
    <ligand>
        <name>S-adenosyl-L-methionine</name>
        <dbReference type="ChEBI" id="CHEBI:59789"/>
    </ligand>
</feature>
<feature type="modified residue" description="Phosphoserine" evidence="1">
    <location>
        <position position="128"/>
    </location>
</feature>
<gene>
    <name evidence="1" type="primary">cysG</name>
    <name type="ordered locus">SEN3304</name>
</gene>
<name>CYSG_SALEP</name>
<evidence type="ECO:0000255" key="1">
    <source>
        <dbReference type="HAMAP-Rule" id="MF_01646"/>
    </source>
</evidence>
<proteinExistence type="inferred from homology"/>
<protein>
    <recommendedName>
        <fullName evidence="1">Siroheme synthase</fullName>
    </recommendedName>
    <domain>
        <recommendedName>
            <fullName evidence="1">Uroporphyrinogen-III C-methyltransferase</fullName>
            <shortName evidence="1">Urogen III methylase</shortName>
            <ecNumber evidence="1">2.1.1.107</ecNumber>
        </recommendedName>
        <alternativeName>
            <fullName evidence="1">SUMT</fullName>
        </alternativeName>
        <alternativeName>
            <fullName evidence="1">Uroporphyrinogen III methylase</fullName>
            <shortName evidence="1">UROM</shortName>
        </alternativeName>
    </domain>
    <domain>
        <recommendedName>
            <fullName evidence="1">Precorrin-2 dehydrogenase</fullName>
            <ecNumber evidence="1">1.3.1.76</ecNumber>
        </recommendedName>
    </domain>
    <domain>
        <recommendedName>
            <fullName evidence="1">Sirohydrochlorin ferrochelatase</fullName>
            <ecNumber evidence="1">4.99.1.4</ecNumber>
        </recommendedName>
    </domain>
</protein>
<keyword id="KW-0169">Cobalamin biosynthesis</keyword>
<keyword id="KW-0456">Lyase</keyword>
<keyword id="KW-0489">Methyltransferase</keyword>
<keyword id="KW-0511">Multifunctional enzyme</keyword>
<keyword id="KW-0520">NAD</keyword>
<keyword id="KW-0560">Oxidoreductase</keyword>
<keyword id="KW-0597">Phosphoprotein</keyword>
<keyword id="KW-0627">Porphyrin biosynthesis</keyword>
<keyword id="KW-0949">S-adenosyl-L-methionine</keyword>
<keyword id="KW-0808">Transferase</keyword>
<accession>B5R2C7</accession>
<dbReference type="EC" id="2.1.1.107" evidence="1"/>
<dbReference type="EC" id="1.3.1.76" evidence="1"/>
<dbReference type="EC" id="4.99.1.4" evidence="1"/>
<dbReference type="EMBL" id="AM933172">
    <property type="protein sequence ID" value="CAR34879.1"/>
    <property type="molecule type" value="Genomic_DNA"/>
</dbReference>
<dbReference type="RefSeq" id="WP_000349897.1">
    <property type="nucleotide sequence ID" value="NC_011294.1"/>
</dbReference>
<dbReference type="SMR" id="B5R2C7"/>
<dbReference type="KEGG" id="set:SEN3304"/>
<dbReference type="HOGENOM" id="CLU_011276_2_0_6"/>
<dbReference type="UniPathway" id="UPA00148">
    <property type="reaction ID" value="UER00211"/>
</dbReference>
<dbReference type="UniPathway" id="UPA00148">
    <property type="reaction ID" value="UER00222"/>
</dbReference>
<dbReference type="UniPathway" id="UPA00262">
    <property type="reaction ID" value="UER00211"/>
</dbReference>
<dbReference type="UniPathway" id="UPA00262">
    <property type="reaction ID" value="UER00222"/>
</dbReference>
<dbReference type="UniPathway" id="UPA00262">
    <property type="reaction ID" value="UER00376"/>
</dbReference>
<dbReference type="Proteomes" id="UP000000613">
    <property type="component" value="Chromosome"/>
</dbReference>
<dbReference type="GO" id="GO:0051287">
    <property type="term" value="F:NAD binding"/>
    <property type="evidence" value="ECO:0007669"/>
    <property type="project" value="InterPro"/>
</dbReference>
<dbReference type="GO" id="GO:0043115">
    <property type="term" value="F:precorrin-2 dehydrogenase activity"/>
    <property type="evidence" value="ECO:0007669"/>
    <property type="project" value="UniProtKB-UniRule"/>
</dbReference>
<dbReference type="GO" id="GO:0051266">
    <property type="term" value="F:sirohydrochlorin ferrochelatase activity"/>
    <property type="evidence" value="ECO:0007669"/>
    <property type="project" value="UniProtKB-EC"/>
</dbReference>
<dbReference type="GO" id="GO:0004851">
    <property type="term" value="F:uroporphyrin-III C-methyltransferase activity"/>
    <property type="evidence" value="ECO:0007669"/>
    <property type="project" value="UniProtKB-UniRule"/>
</dbReference>
<dbReference type="GO" id="GO:0009236">
    <property type="term" value="P:cobalamin biosynthetic process"/>
    <property type="evidence" value="ECO:0007669"/>
    <property type="project" value="UniProtKB-UniRule"/>
</dbReference>
<dbReference type="GO" id="GO:0032259">
    <property type="term" value="P:methylation"/>
    <property type="evidence" value="ECO:0007669"/>
    <property type="project" value="UniProtKB-KW"/>
</dbReference>
<dbReference type="GO" id="GO:0019354">
    <property type="term" value="P:siroheme biosynthetic process"/>
    <property type="evidence" value="ECO:0007669"/>
    <property type="project" value="UniProtKB-UniRule"/>
</dbReference>
<dbReference type="CDD" id="cd11642">
    <property type="entry name" value="SUMT"/>
    <property type="match status" value="1"/>
</dbReference>
<dbReference type="FunFam" id="1.10.8.210:FF:000001">
    <property type="entry name" value="Siroheme synthase"/>
    <property type="match status" value="1"/>
</dbReference>
<dbReference type="FunFam" id="3.30.160.110:FF:000001">
    <property type="entry name" value="Siroheme synthase"/>
    <property type="match status" value="1"/>
</dbReference>
<dbReference type="FunFam" id="3.30.950.10:FF:000001">
    <property type="entry name" value="Siroheme synthase"/>
    <property type="match status" value="1"/>
</dbReference>
<dbReference type="FunFam" id="3.40.1010.10:FF:000001">
    <property type="entry name" value="Siroheme synthase"/>
    <property type="match status" value="1"/>
</dbReference>
<dbReference type="FunFam" id="3.40.50.720:FF:000092">
    <property type="entry name" value="Siroheme synthase"/>
    <property type="match status" value="1"/>
</dbReference>
<dbReference type="Gene3D" id="3.40.1010.10">
    <property type="entry name" value="Cobalt-precorrin-4 Transmethylase, Domain 1"/>
    <property type="match status" value="1"/>
</dbReference>
<dbReference type="Gene3D" id="3.30.950.10">
    <property type="entry name" value="Methyltransferase, Cobalt-precorrin-4 Transmethylase, Domain 2"/>
    <property type="match status" value="1"/>
</dbReference>
<dbReference type="Gene3D" id="3.40.50.720">
    <property type="entry name" value="NAD(P)-binding Rossmann-like Domain"/>
    <property type="match status" value="1"/>
</dbReference>
<dbReference type="Gene3D" id="1.10.8.210">
    <property type="entry name" value="Sirohaem synthase, dimerisation domain"/>
    <property type="match status" value="1"/>
</dbReference>
<dbReference type="Gene3D" id="3.30.160.110">
    <property type="entry name" value="Siroheme synthase, domain 2"/>
    <property type="match status" value="1"/>
</dbReference>
<dbReference type="HAMAP" id="MF_01646">
    <property type="entry name" value="Siroheme_synth"/>
    <property type="match status" value="1"/>
</dbReference>
<dbReference type="InterPro" id="IPR000878">
    <property type="entry name" value="4pyrrol_Mease"/>
</dbReference>
<dbReference type="InterPro" id="IPR035996">
    <property type="entry name" value="4pyrrol_Methylase_sf"/>
</dbReference>
<dbReference type="InterPro" id="IPR014777">
    <property type="entry name" value="4pyrrole_Mease_sub1"/>
</dbReference>
<dbReference type="InterPro" id="IPR014776">
    <property type="entry name" value="4pyrrole_Mease_sub2"/>
</dbReference>
<dbReference type="InterPro" id="IPR006366">
    <property type="entry name" value="CobA/CysG_C"/>
</dbReference>
<dbReference type="InterPro" id="IPR036291">
    <property type="entry name" value="NAD(P)-bd_dom_sf"/>
</dbReference>
<dbReference type="InterPro" id="IPR050161">
    <property type="entry name" value="Siro_Cobalamin_biosynth"/>
</dbReference>
<dbReference type="InterPro" id="IPR037115">
    <property type="entry name" value="Sirohaem_synt_dimer_dom_sf"/>
</dbReference>
<dbReference type="InterPro" id="IPR012409">
    <property type="entry name" value="Sirohaem_synth"/>
</dbReference>
<dbReference type="InterPro" id="IPR028281">
    <property type="entry name" value="Sirohaem_synthase_central"/>
</dbReference>
<dbReference type="InterPro" id="IPR019478">
    <property type="entry name" value="Sirohaem_synthase_dimer_dom"/>
</dbReference>
<dbReference type="InterPro" id="IPR006367">
    <property type="entry name" value="Sirohaem_synthase_N"/>
</dbReference>
<dbReference type="InterPro" id="IPR003043">
    <property type="entry name" value="Uropor_MeTrfase_CS"/>
</dbReference>
<dbReference type="NCBIfam" id="TIGR01469">
    <property type="entry name" value="cobA_cysG_Cterm"/>
    <property type="match status" value="1"/>
</dbReference>
<dbReference type="NCBIfam" id="TIGR01470">
    <property type="entry name" value="cysG_Nterm"/>
    <property type="match status" value="1"/>
</dbReference>
<dbReference type="NCBIfam" id="NF004790">
    <property type="entry name" value="PRK06136.1"/>
    <property type="match status" value="1"/>
</dbReference>
<dbReference type="NCBIfam" id="NF007922">
    <property type="entry name" value="PRK10637.1"/>
    <property type="match status" value="1"/>
</dbReference>
<dbReference type="PANTHER" id="PTHR45790:SF1">
    <property type="entry name" value="SIROHEME SYNTHASE"/>
    <property type="match status" value="1"/>
</dbReference>
<dbReference type="PANTHER" id="PTHR45790">
    <property type="entry name" value="SIROHEME SYNTHASE-RELATED"/>
    <property type="match status" value="1"/>
</dbReference>
<dbReference type="Pfam" id="PF10414">
    <property type="entry name" value="CysG_dimeriser"/>
    <property type="match status" value="1"/>
</dbReference>
<dbReference type="Pfam" id="PF13241">
    <property type="entry name" value="NAD_binding_7"/>
    <property type="match status" value="1"/>
</dbReference>
<dbReference type="Pfam" id="PF14824">
    <property type="entry name" value="Sirohm_synth_M"/>
    <property type="match status" value="1"/>
</dbReference>
<dbReference type="Pfam" id="PF00590">
    <property type="entry name" value="TP_methylase"/>
    <property type="match status" value="1"/>
</dbReference>
<dbReference type="PIRSF" id="PIRSF036426">
    <property type="entry name" value="Sirohaem_synth"/>
    <property type="match status" value="1"/>
</dbReference>
<dbReference type="SUPFAM" id="SSF51735">
    <property type="entry name" value="NAD(P)-binding Rossmann-fold domains"/>
    <property type="match status" value="1"/>
</dbReference>
<dbReference type="SUPFAM" id="SSF75615">
    <property type="entry name" value="Siroheme synthase middle domains-like"/>
    <property type="match status" value="1"/>
</dbReference>
<dbReference type="SUPFAM" id="SSF53790">
    <property type="entry name" value="Tetrapyrrole methylase"/>
    <property type="match status" value="1"/>
</dbReference>
<dbReference type="PROSITE" id="PS00839">
    <property type="entry name" value="SUMT_1"/>
    <property type="match status" value="1"/>
</dbReference>
<dbReference type="PROSITE" id="PS00840">
    <property type="entry name" value="SUMT_2"/>
    <property type="match status" value="1"/>
</dbReference>